<organism>
    <name type="scientific">Cyanophora paradoxa</name>
    <dbReference type="NCBI Taxonomy" id="2762"/>
    <lineage>
        <taxon>Eukaryota</taxon>
        <taxon>Glaucocystophyceae</taxon>
        <taxon>Cyanophoraceae</taxon>
        <taxon>Cyanophora</taxon>
    </lineage>
</organism>
<accession>P17007</accession>
<proteinExistence type="evidence at protein level"/>
<evidence type="ECO:0000250" key="1"/>
<evidence type="ECO:0000255" key="2">
    <source>
        <dbReference type="PROSITE-ProRule" id="PRU00465"/>
    </source>
</evidence>
<evidence type="ECO:0000269" key="3">
    <source ref="5"/>
</evidence>
<evidence type="ECO:0000305" key="4"/>
<protein>
    <recommendedName>
        <fullName>Ferredoxin-1</fullName>
    </recommendedName>
    <alternativeName>
        <fullName>Ferredoxin I</fullName>
    </alternativeName>
</protein>
<sequence length="99" mass="10726">MAVYKVRLICEEQGLDTTIECPDDEYILDAAEEQGIDLPYSCRAGACSTCAGKVVEGTVDQSDQSFLDDAQLAAGYVLTCVAYPSSDCTVKTHQEESLY</sequence>
<gene>
    <name type="primary">petF</name>
</gene>
<dbReference type="EMBL" id="X52143">
    <property type="protein sequence ID" value="CAA36387.1"/>
    <property type="molecule type" value="Genomic_DNA"/>
</dbReference>
<dbReference type="EMBL" id="M35206">
    <property type="protein sequence ID" value="AAA31699.1"/>
    <property type="molecule type" value="Genomic_DNA"/>
</dbReference>
<dbReference type="EMBL" id="U30821">
    <property type="protein sequence ID" value="AAA81236.1"/>
    <property type="molecule type" value="Genomic_DNA"/>
</dbReference>
<dbReference type="PIR" id="S11048">
    <property type="entry name" value="FEKT1"/>
</dbReference>
<dbReference type="RefSeq" id="NP_043205.1">
    <property type="nucleotide sequence ID" value="NC_001675.1"/>
</dbReference>
<dbReference type="SMR" id="P17007"/>
<dbReference type="GeneID" id="801671"/>
<dbReference type="GO" id="GO:0009842">
    <property type="term" value="C:cyanelle"/>
    <property type="evidence" value="ECO:0007669"/>
    <property type="project" value="UniProtKB-SubCell"/>
</dbReference>
<dbReference type="GO" id="GO:0051537">
    <property type="term" value="F:2 iron, 2 sulfur cluster binding"/>
    <property type="evidence" value="ECO:0007669"/>
    <property type="project" value="UniProtKB-KW"/>
</dbReference>
<dbReference type="GO" id="GO:0009055">
    <property type="term" value="F:electron transfer activity"/>
    <property type="evidence" value="ECO:0007669"/>
    <property type="project" value="InterPro"/>
</dbReference>
<dbReference type="GO" id="GO:0046872">
    <property type="term" value="F:metal ion binding"/>
    <property type="evidence" value="ECO:0007669"/>
    <property type="project" value="UniProtKB-KW"/>
</dbReference>
<dbReference type="GO" id="GO:0022900">
    <property type="term" value="P:electron transport chain"/>
    <property type="evidence" value="ECO:0007669"/>
    <property type="project" value="InterPro"/>
</dbReference>
<dbReference type="CDD" id="cd00207">
    <property type="entry name" value="fer2"/>
    <property type="match status" value="1"/>
</dbReference>
<dbReference type="FunFam" id="3.10.20.30:FF:000014">
    <property type="entry name" value="Ferredoxin"/>
    <property type="match status" value="1"/>
</dbReference>
<dbReference type="Gene3D" id="3.10.20.30">
    <property type="match status" value="1"/>
</dbReference>
<dbReference type="InterPro" id="IPR036010">
    <property type="entry name" value="2Fe-2S_ferredoxin-like_sf"/>
</dbReference>
<dbReference type="InterPro" id="IPR001041">
    <property type="entry name" value="2Fe-2S_ferredoxin-type"/>
</dbReference>
<dbReference type="InterPro" id="IPR006058">
    <property type="entry name" value="2Fe2S_fd_BS"/>
</dbReference>
<dbReference type="InterPro" id="IPR012675">
    <property type="entry name" value="Beta-grasp_dom_sf"/>
</dbReference>
<dbReference type="InterPro" id="IPR010241">
    <property type="entry name" value="Fd_pln"/>
</dbReference>
<dbReference type="NCBIfam" id="TIGR02008">
    <property type="entry name" value="fdx_plant"/>
    <property type="match status" value="1"/>
</dbReference>
<dbReference type="PANTHER" id="PTHR43112">
    <property type="entry name" value="FERREDOXIN"/>
    <property type="match status" value="1"/>
</dbReference>
<dbReference type="PANTHER" id="PTHR43112:SF3">
    <property type="entry name" value="FERREDOXIN-2, CHLOROPLASTIC"/>
    <property type="match status" value="1"/>
</dbReference>
<dbReference type="Pfam" id="PF00111">
    <property type="entry name" value="Fer2"/>
    <property type="match status" value="1"/>
</dbReference>
<dbReference type="SUPFAM" id="SSF54292">
    <property type="entry name" value="2Fe-2S ferredoxin-like"/>
    <property type="match status" value="1"/>
</dbReference>
<dbReference type="PROSITE" id="PS00197">
    <property type="entry name" value="2FE2S_FER_1"/>
    <property type="match status" value="1"/>
</dbReference>
<dbReference type="PROSITE" id="PS51085">
    <property type="entry name" value="2FE2S_FER_2"/>
    <property type="match status" value="1"/>
</dbReference>
<geneLocation type="cyanelle"/>
<name>FER1_CYAPA</name>
<reference key="1">
    <citation type="journal article" date="1990" name="FEBS Lett.">
        <title>The petFI gene encoding ferredoxin I is located close to the str operon on the cyanelle genome of Cyanophora paradoxa.</title>
        <authorList>
            <person name="Neumann-Spallart C."/>
            <person name="Brandtner M."/>
            <person name="Kraus M."/>
            <person name="Jakowitch J."/>
            <person name="Bayer M.G."/>
            <person name="Maier T.L."/>
            <person name="Schenk H.E.A."/>
            <person name="Loeffelhardt W."/>
        </authorList>
    </citation>
    <scope>NUCLEOTIDE SEQUENCE [GENOMIC DNA]</scope>
    <source>
        <strain>UTEX LB 555 / Pringsheim</strain>
    </source>
</reference>
<reference key="2">
    <citation type="journal article" date="1991" name="Gene">
        <title>Ferredoxin and ribosomal protein S10 are encoded on the cyanelle genome of Cyanophora paradoxa.</title>
        <authorList>
            <person name="Bryant D.A."/>
            <person name="Schluchter W.M."/>
            <person name="Stirewalt V.L."/>
        </authorList>
    </citation>
    <scope>NUCLEOTIDE SEQUENCE [GENOMIC DNA]</scope>
</reference>
<reference key="3">
    <citation type="journal article" date="1995" name="Plant Mol. Biol. Rep.">
        <title>Nucleotide sequence of the cyanelle DNA from Cyanophora paradoxa.</title>
        <authorList>
            <person name="Stirewalt V.L."/>
            <person name="Michalowski C.B."/>
            <person name="Loeffelhardt W."/>
            <person name="Bohnert H.J."/>
            <person name="Bryant D.A."/>
        </authorList>
    </citation>
    <scope>NUCLEOTIDE SEQUENCE [LARGE SCALE GENOMIC DNA]</scope>
    <source>
        <strain>UTEX LB 555 / Pringsheim</strain>
    </source>
</reference>
<reference key="4">
    <citation type="book" date="1997" name="Eukaryotism and symbiosis">
        <title>The complete sequence of the cyanelle genome of Cyanophora paradoxa: the genetic complexity of a primitive plastid.</title>
        <editorList>
            <person name="Schenk H.E.A."/>
            <person name="Herrmann R."/>
            <person name="Jeon K.W."/>
            <person name="Mueller N.E."/>
            <person name="Schwemmler W."/>
        </editorList>
        <authorList>
            <person name="Loeffelhardt W."/>
            <person name="Stirewalt V.L."/>
            <person name="Michalowski C.B."/>
            <person name="Annarella M."/>
            <person name="Farley J.Y."/>
            <person name="Schluchter W.M."/>
            <person name="Chung S."/>
            <person name="Newmann-Spallart C."/>
            <person name="Steiner J.M."/>
            <person name="Jakowitsch J."/>
            <person name="Bohnert H.J."/>
            <person name="Bryant D.A."/>
        </authorList>
    </citation>
    <scope>NUCLEOTIDE SEQUENCE [LARGE SCALE GENOMIC DNA]</scope>
    <source>
        <strain>UTEX LB 555 / Pringsheim</strain>
    </source>
</reference>
<reference key="5">
    <citation type="journal article" date="1990" name="Endocyt. Cell Res.">
        <title>Cyanophora paradoxa korsch.: ferredoxin partial amino-terminal amino acid sequence, phylogenetic/taxonomic evidence.</title>
        <authorList>
            <person name="Stevanovic S."/>
            <person name="Bayer M.G."/>
            <person name="Troger W."/>
            <person name="Schenk H.E.A."/>
        </authorList>
    </citation>
    <scope>PROTEIN SEQUENCE OF 2-13</scope>
</reference>
<keyword id="KW-0001">2Fe-2S</keyword>
<keyword id="KW-0194">Cyanelle</keyword>
<keyword id="KW-0903">Direct protein sequencing</keyword>
<keyword id="KW-0249">Electron transport</keyword>
<keyword id="KW-0408">Iron</keyword>
<keyword id="KW-0411">Iron-sulfur</keyword>
<keyword id="KW-0479">Metal-binding</keyword>
<keyword id="KW-0934">Plastid</keyword>
<keyword id="KW-0813">Transport</keyword>
<comment type="function">
    <text>Ferredoxins are iron-sulfur proteins that transfer electrons in a wide variety of metabolic reactions.</text>
</comment>
<comment type="cofactor">
    <cofactor>
        <name>[2Fe-2S] cluster</name>
        <dbReference type="ChEBI" id="CHEBI:190135"/>
    </cofactor>
    <text>Binds 1 [2Fe-2S] cluster.</text>
</comment>
<comment type="subunit">
    <text evidence="1">Forms a complex with heterodimeric ferredoxin-thioredoxin reductase (FTR) and thioredoxin.</text>
</comment>
<comment type="subcellular location">
    <subcellularLocation>
        <location>Plastid</location>
        <location>Cyanelle</location>
    </subcellularLocation>
</comment>
<comment type="similarity">
    <text evidence="4">Belongs to the 2Fe2S plant-type ferredoxin family.</text>
</comment>
<feature type="initiator methionine" description="Removed" evidence="3">
    <location>
        <position position="1"/>
    </location>
</feature>
<feature type="chain" id="PRO_0000189319" description="Ferredoxin-1">
    <location>
        <begin position="2"/>
        <end position="99"/>
    </location>
</feature>
<feature type="domain" description="2Fe-2S ferredoxin-type" evidence="2">
    <location>
        <begin position="4"/>
        <end position="96"/>
    </location>
</feature>
<feature type="binding site" evidence="2">
    <location>
        <position position="42"/>
    </location>
    <ligand>
        <name>[2Fe-2S] cluster</name>
        <dbReference type="ChEBI" id="CHEBI:190135"/>
    </ligand>
</feature>
<feature type="binding site" evidence="2">
    <location>
        <position position="47"/>
    </location>
    <ligand>
        <name>[2Fe-2S] cluster</name>
        <dbReference type="ChEBI" id="CHEBI:190135"/>
    </ligand>
</feature>
<feature type="binding site" evidence="2">
    <location>
        <position position="50"/>
    </location>
    <ligand>
        <name>[2Fe-2S] cluster</name>
        <dbReference type="ChEBI" id="CHEBI:190135"/>
    </ligand>
</feature>
<feature type="binding site" evidence="2">
    <location>
        <position position="80"/>
    </location>
    <ligand>
        <name>[2Fe-2S] cluster</name>
        <dbReference type="ChEBI" id="CHEBI:190135"/>
    </ligand>
</feature>